<dbReference type="EC" id="3.5.5.1"/>
<dbReference type="EMBL" id="J03196">
    <property type="protein sequence ID" value="AAA25057.1"/>
    <property type="molecule type" value="Genomic_DNA"/>
</dbReference>
<dbReference type="PIR" id="A28658">
    <property type="entry name" value="A28658"/>
</dbReference>
<dbReference type="SMR" id="P10045"/>
<dbReference type="KEGG" id="ag:AAA25057"/>
<dbReference type="GO" id="GO:0000257">
    <property type="term" value="F:nitrilase activity"/>
    <property type="evidence" value="ECO:0007669"/>
    <property type="project" value="UniProtKB-EC"/>
</dbReference>
<dbReference type="GO" id="GO:0009635">
    <property type="term" value="P:response to herbicide"/>
    <property type="evidence" value="ECO:0007669"/>
    <property type="project" value="UniProtKB-KW"/>
</dbReference>
<dbReference type="CDD" id="cd07564">
    <property type="entry name" value="nitrilases_CHs"/>
    <property type="match status" value="1"/>
</dbReference>
<dbReference type="Gene3D" id="3.60.110.10">
    <property type="entry name" value="Carbon-nitrogen hydrolase"/>
    <property type="match status" value="1"/>
</dbReference>
<dbReference type="InterPro" id="IPR003010">
    <property type="entry name" value="C-N_Hydrolase"/>
</dbReference>
<dbReference type="InterPro" id="IPR036526">
    <property type="entry name" value="C-N_Hydrolase_sf"/>
</dbReference>
<dbReference type="InterPro" id="IPR000132">
    <property type="entry name" value="Nitrilase/CN_hydratase_CS"/>
</dbReference>
<dbReference type="InterPro" id="IPR044149">
    <property type="entry name" value="Nitrilases_CHs"/>
</dbReference>
<dbReference type="PANTHER" id="PTHR46044:SF4">
    <property type="entry name" value="CYANIDE HYDRATASE"/>
    <property type="match status" value="1"/>
</dbReference>
<dbReference type="PANTHER" id="PTHR46044">
    <property type="entry name" value="NITRILASE"/>
    <property type="match status" value="1"/>
</dbReference>
<dbReference type="Pfam" id="PF00795">
    <property type="entry name" value="CN_hydrolase"/>
    <property type="match status" value="1"/>
</dbReference>
<dbReference type="SUPFAM" id="SSF56317">
    <property type="entry name" value="Carbon-nitrogen hydrolase"/>
    <property type="match status" value="1"/>
</dbReference>
<dbReference type="PROSITE" id="PS50263">
    <property type="entry name" value="CN_HYDROLASE"/>
    <property type="match status" value="1"/>
</dbReference>
<dbReference type="PROSITE" id="PS00920">
    <property type="entry name" value="NITRIL_CHT_1"/>
    <property type="match status" value="1"/>
</dbReference>
<dbReference type="PROSITE" id="PS00921">
    <property type="entry name" value="NITRIL_CHT_2"/>
    <property type="match status" value="1"/>
</dbReference>
<protein>
    <recommendedName>
        <fullName>Nitrilase, bromoxynil-specific</fullName>
        <ecNumber>3.5.5.1</ecNumber>
    </recommendedName>
</protein>
<evidence type="ECO:0000255" key="1">
    <source>
        <dbReference type="PROSITE-ProRule" id="PRU00054"/>
    </source>
</evidence>
<evidence type="ECO:0000255" key="2">
    <source>
        <dbReference type="PROSITE-ProRule" id="PRU10105"/>
    </source>
</evidence>
<evidence type="ECO:0000305" key="3"/>
<sequence>MDTTFKAAAVQAEPVWMDAAATADKTVTLVAKAAAAGAQLVAFPELWIPGYPGFMLTHNQTETLPFIIKYRKQAIAADGPEIEKIRCAAQEHNIALSFGYSERAGRTLYMSQMLIDADGITKIRRRKLKPTRFERELFGEGDGSDLQVAQTSVGRVGALNCAENLQSLNKFALAAEGEQIHISAWPFTLGSPVLVGDSIGAINQVYAAETGTFVLMSTQVVGPTGIAAFEIEDRYNPNQYLGGGYARIYGPDMQLKSKSLSPTEEGIVYAEIDLSMLEAAKYSLDPTGHYSRPDVFSVSINRQRQPAVSEVIDSNGDEDPRAACEPDEGDREVVISTAIGVLPRYCGHS</sequence>
<name>NRLB_KLEPO</name>
<gene>
    <name type="primary">bxn</name>
</gene>
<organism>
    <name type="scientific">Klebsiella pneumoniae subsp. ozaenae</name>
    <dbReference type="NCBI Taxonomy" id="574"/>
    <lineage>
        <taxon>Bacteria</taxon>
        <taxon>Pseudomonadati</taxon>
        <taxon>Pseudomonadota</taxon>
        <taxon>Gammaproteobacteria</taxon>
        <taxon>Enterobacterales</taxon>
        <taxon>Enterobacteriaceae</taxon>
        <taxon>Klebsiella/Raoultella group</taxon>
        <taxon>Klebsiella</taxon>
        <taxon>Klebsiella pneumoniae complex</taxon>
    </lineage>
</organism>
<accession>P10045</accession>
<feature type="chain" id="PRO_0000204044" description="Nitrilase, bromoxynil-specific">
    <location>
        <begin position="1"/>
        <end position="349"/>
    </location>
</feature>
<feature type="domain" description="CN hydrolase" evidence="1">
    <location>
        <begin position="5"/>
        <end position="274"/>
    </location>
</feature>
<feature type="active site" description="Proton acceptor" evidence="1">
    <location>
        <position position="45"/>
    </location>
</feature>
<feature type="active site" description="Proton donor" evidence="1">
    <location>
        <position position="127"/>
    </location>
</feature>
<feature type="active site" description="Nucleophile" evidence="1 2">
    <location>
        <position position="161"/>
    </location>
</feature>
<comment type="function">
    <text>Specific for the herbicide bromoxynil (3,5-dibromo-4-hydroxybenzonitrile); converts it to its metabolite 3,5-dibromo-4-hydroxybenzoic acid.</text>
</comment>
<comment type="catalytic activity">
    <reaction evidence="2">
        <text>a nitrile + 2 H2O = a carboxylate + NH4(+)</text>
        <dbReference type="Rhea" id="RHEA:21724"/>
        <dbReference type="ChEBI" id="CHEBI:15377"/>
        <dbReference type="ChEBI" id="CHEBI:18379"/>
        <dbReference type="ChEBI" id="CHEBI:28938"/>
        <dbReference type="ChEBI" id="CHEBI:29067"/>
        <dbReference type="EC" id="3.5.5.1"/>
    </reaction>
</comment>
<comment type="subunit">
    <text>Homodimer.</text>
</comment>
<comment type="miscellaneous">
    <text>Introduced by genetic manipulation and expressed in bromoxynil-tolerant cotton by Monsanto (Calgene).</text>
</comment>
<comment type="similarity">
    <text evidence="3">Belongs to the carbon-nitrogen hydrolase superfamily. Nitrilase family.</text>
</comment>
<reference key="1">
    <citation type="journal article" date="1988" name="J. Biol. Chem.">
        <title>Purification and properties of a nitrilase specific for the herbicide bromoxynil and corresponding nucleotide sequence analysis of the bxn gene.</title>
        <authorList>
            <person name="Stalker D.M."/>
            <person name="Malyj L.D."/>
            <person name="McBride K.E."/>
        </authorList>
    </citation>
    <scope>NUCLEOTIDE SEQUENCE [GENOMIC DNA]</scope>
    <scope>CHARACTERIZATION</scope>
</reference>
<proteinExistence type="evidence at protein level"/>
<keyword id="KW-0308">Genetically modified food</keyword>
<keyword id="KW-0359">Herbicide resistance</keyword>
<keyword id="KW-0378">Hydrolase</keyword>
<keyword id="KW-0614">Plasmid</keyword>
<geneLocation type="plasmid"/>